<proteinExistence type="inferred from homology"/>
<evidence type="ECO:0000255" key="1">
    <source>
        <dbReference type="HAMAP-Rule" id="MF_00205"/>
    </source>
</evidence>
<sequence length="955" mass="106351">MIMNQEYIKVRGAKEHNLKNINVDIPRNKFVVITGLSGSGKSSLAFDTIYAEGQRRYVESLSSYARQFLHLQNKPNVESISGLSPAIAIDQKTTSKNPRSTVGTITEIYDYLRLLYARVGIPYSPATGLPIHSQTVSEMVDIINELPKGTKVYLLAPIVRGHKGEFKREIMNLKKQGFQKLIVNGEVCEIDDLPKLDKNKKHNIEVIVDRIVLDESLGNRLADSLESSLNLAEGITYLEIVELPPAVKTEFEKNQRITFSEKYSCPVSGFQLTEIEPRIFSFNSPFGACPKCEGIGKEFFFDRELIVPDQRISIKDGAIVPWGSTSSKFILETLKALADHYKFSIEVPFASLSQNVKDILFEGSGEEAIKFEFHDGSKTQIIKQPFAGIIPSLQEKDRTIESVLIKEELAKFKSEHKCTACSGFRLKDEALCVKIANFHIGEVAGMSIAALQKWFSHLEEKLNKKQLFIAERILKEITERLKFLMNVGLDYLTLSREAGTLSGGESQRIRLASQIGSGLSGVLYVLDEPSIGLHQRDNTRLIETLKRLRDLGNTVLVVEHDEETMYEADHIIDIGPGAGIHGGRVIAEGNAEEIKNFEESITGRYLSGRQTIKVPSETRVGHDNRSIELLGAVSNNLDNVDIKIPLGTFTAITGVSGSGKSSLMIHTLYKAALKHLETTSKVFPGKYRELKGLEYIDKIIDINQSPIGRTPRSNPATYTGAFTHIRDWFVELPESKARGYKVGRFSFNVKGGRCEACQGDGLIKIEMHFLPDVYVKCDICNGHRYNRETLEIKYKGKSIADILMMTVEDAMQFFEKIPLIYEKLITLNEVGLGYIKIGQSATTLSGGEAQRVKLAKELSRRSTGKTLYILDEPTTGLHIDDINKLLKVLHKLVDMGNTVLVIEHNLDVIKTADYIIDVGPEGGDKGGKIVVCGTPADIAACAESHTGRYLKQYLE</sequence>
<feature type="chain" id="PRO_0000278042" description="UvrABC system protein A">
    <location>
        <begin position="1"/>
        <end position="955"/>
    </location>
</feature>
<feature type="domain" description="ABC transporter 1" evidence="1">
    <location>
        <begin position="322"/>
        <end position="601"/>
    </location>
</feature>
<feature type="domain" description="ABC transporter 2" evidence="1">
    <location>
        <begin position="621"/>
        <end position="951"/>
    </location>
</feature>
<feature type="zinc finger region" description="C4-type" evidence="1">
    <location>
        <begin position="754"/>
        <end position="780"/>
    </location>
</feature>
<feature type="binding site" evidence="1">
    <location>
        <begin position="35"/>
        <end position="42"/>
    </location>
    <ligand>
        <name>ATP</name>
        <dbReference type="ChEBI" id="CHEBI:30616"/>
    </ligand>
</feature>
<feature type="binding site" evidence="1">
    <location>
        <begin position="654"/>
        <end position="661"/>
    </location>
    <ligand>
        <name>ATP</name>
        <dbReference type="ChEBI" id="CHEBI:30616"/>
    </ligand>
</feature>
<reference key="1">
    <citation type="journal article" date="2005" name="PLoS Biol.">
        <title>The genome sequence of Rickettsia felis identifies the first putative conjugative plasmid in an obligate intracellular parasite.</title>
        <authorList>
            <person name="Ogata H."/>
            <person name="Renesto P."/>
            <person name="Audic S."/>
            <person name="Robert C."/>
            <person name="Blanc G."/>
            <person name="Fournier P.-E."/>
            <person name="Parinello H."/>
            <person name="Claverie J.-M."/>
            <person name="Raoult D."/>
        </authorList>
    </citation>
    <scope>NUCLEOTIDE SEQUENCE [LARGE SCALE GENOMIC DNA]</scope>
    <source>
        <strain>ATCC VR-1525 / URRWXCal2</strain>
    </source>
</reference>
<dbReference type="EMBL" id="CP000053">
    <property type="protein sequence ID" value="AAY62175.1"/>
    <property type="molecule type" value="Genomic_DNA"/>
</dbReference>
<dbReference type="SMR" id="Q4UJW4"/>
<dbReference type="STRING" id="315456.RF_1324"/>
<dbReference type="KEGG" id="rfe:RF_1324"/>
<dbReference type="eggNOG" id="COG0178">
    <property type="taxonomic scope" value="Bacteria"/>
</dbReference>
<dbReference type="HOGENOM" id="CLU_001370_0_2_5"/>
<dbReference type="Proteomes" id="UP000008548">
    <property type="component" value="Chromosome"/>
</dbReference>
<dbReference type="GO" id="GO:0005737">
    <property type="term" value="C:cytoplasm"/>
    <property type="evidence" value="ECO:0007669"/>
    <property type="project" value="UniProtKB-SubCell"/>
</dbReference>
<dbReference type="GO" id="GO:0009380">
    <property type="term" value="C:excinuclease repair complex"/>
    <property type="evidence" value="ECO:0007669"/>
    <property type="project" value="InterPro"/>
</dbReference>
<dbReference type="GO" id="GO:0005524">
    <property type="term" value="F:ATP binding"/>
    <property type="evidence" value="ECO:0007669"/>
    <property type="project" value="UniProtKB-UniRule"/>
</dbReference>
<dbReference type="GO" id="GO:0016887">
    <property type="term" value="F:ATP hydrolysis activity"/>
    <property type="evidence" value="ECO:0007669"/>
    <property type="project" value="InterPro"/>
</dbReference>
<dbReference type="GO" id="GO:0003677">
    <property type="term" value="F:DNA binding"/>
    <property type="evidence" value="ECO:0007669"/>
    <property type="project" value="UniProtKB-UniRule"/>
</dbReference>
<dbReference type="GO" id="GO:0009381">
    <property type="term" value="F:excinuclease ABC activity"/>
    <property type="evidence" value="ECO:0007669"/>
    <property type="project" value="UniProtKB-UniRule"/>
</dbReference>
<dbReference type="GO" id="GO:0008270">
    <property type="term" value="F:zinc ion binding"/>
    <property type="evidence" value="ECO:0007669"/>
    <property type="project" value="UniProtKB-UniRule"/>
</dbReference>
<dbReference type="GO" id="GO:0006289">
    <property type="term" value="P:nucleotide-excision repair"/>
    <property type="evidence" value="ECO:0007669"/>
    <property type="project" value="UniProtKB-UniRule"/>
</dbReference>
<dbReference type="GO" id="GO:0009432">
    <property type="term" value="P:SOS response"/>
    <property type="evidence" value="ECO:0007669"/>
    <property type="project" value="UniProtKB-UniRule"/>
</dbReference>
<dbReference type="CDD" id="cd03270">
    <property type="entry name" value="ABC_UvrA_I"/>
    <property type="match status" value="1"/>
</dbReference>
<dbReference type="CDD" id="cd03271">
    <property type="entry name" value="ABC_UvrA_II"/>
    <property type="match status" value="1"/>
</dbReference>
<dbReference type="FunFam" id="1.20.1580.10:FF:000002">
    <property type="entry name" value="UvrABC system protein A"/>
    <property type="match status" value="1"/>
</dbReference>
<dbReference type="Gene3D" id="1.10.8.280">
    <property type="entry name" value="ABC transporter ATPase domain-like"/>
    <property type="match status" value="1"/>
</dbReference>
<dbReference type="Gene3D" id="1.20.1580.10">
    <property type="entry name" value="ABC transporter ATPase like domain"/>
    <property type="match status" value="2"/>
</dbReference>
<dbReference type="Gene3D" id="3.30.1490.20">
    <property type="entry name" value="ATP-grasp fold, A domain"/>
    <property type="match status" value="1"/>
</dbReference>
<dbReference type="Gene3D" id="3.40.50.300">
    <property type="entry name" value="P-loop containing nucleotide triphosphate hydrolases"/>
    <property type="match status" value="2"/>
</dbReference>
<dbReference type="HAMAP" id="MF_00205">
    <property type="entry name" value="UvrA"/>
    <property type="match status" value="1"/>
</dbReference>
<dbReference type="InterPro" id="IPR003439">
    <property type="entry name" value="ABC_transporter-like_ATP-bd"/>
</dbReference>
<dbReference type="InterPro" id="IPR017871">
    <property type="entry name" value="ABC_transporter-like_CS"/>
</dbReference>
<dbReference type="InterPro" id="IPR013815">
    <property type="entry name" value="ATP_grasp_subdomain_1"/>
</dbReference>
<dbReference type="InterPro" id="IPR027417">
    <property type="entry name" value="P-loop_NTPase"/>
</dbReference>
<dbReference type="InterPro" id="IPR004602">
    <property type="entry name" value="UvrA"/>
</dbReference>
<dbReference type="InterPro" id="IPR041552">
    <property type="entry name" value="UvrA_DNA-bd"/>
</dbReference>
<dbReference type="InterPro" id="IPR041102">
    <property type="entry name" value="UvrA_inter"/>
</dbReference>
<dbReference type="NCBIfam" id="NF001503">
    <property type="entry name" value="PRK00349.1"/>
    <property type="match status" value="1"/>
</dbReference>
<dbReference type="NCBIfam" id="TIGR00630">
    <property type="entry name" value="uvra"/>
    <property type="match status" value="1"/>
</dbReference>
<dbReference type="PANTHER" id="PTHR43152">
    <property type="entry name" value="UVRABC SYSTEM PROTEIN A"/>
    <property type="match status" value="1"/>
</dbReference>
<dbReference type="PANTHER" id="PTHR43152:SF3">
    <property type="entry name" value="UVRABC SYSTEM PROTEIN A"/>
    <property type="match status" value="1"/>
</dbReference>
<dbReference type="Pfam" id="PF17755">
    <property type="entry name" value="UvrA_DNA-bind"/>
    <property type="match status" value="1"/>
</dbReference>
<dbReference type="Pfam" id="PF17760">
    <property type="entry name" value="UvrA_inter"/>
    <property type="match status" value="1"/>
</dbReference>
<dbReference type="SUPFAM" id="SSF52540">
    <property type="entry name" value="P-loop containing nucleoside triphosphate hydrolases"/>
    <property type="match status" value="2"/>
</dbReference>
<dbReference type="PROSITE" id="PS00211">
    <property type="entry name" value="ABC_TRANSPORTER_1"/>
    <property type="match status" value="2"/>
</dbReference>
<dbReference type="PROSITE" id="PS50893">
    <property type="entry name" value="ABC_TRANSPORTER_2"/>
    <property type="match status" value="2"/>
</dbReference>
<keyword id="KW-0067">ATP-binding</keyword>
<keyword id="KW-0963">Cytoplasm</keyword>
<keyword id="KW-0227">DNA damage</keyword>
<keyword id="KW-0228">DNA excision</keyword>
<keyword id="KW-0234">DNA repair</keyword>
<keyword id="KW-0238">DNA-binding</keyword>
<keyword id="KW-0267">Excision nuclease</keyword>
<keyword id="KW-0479">Metal-binding</keyword>
<keyword id="KW-0547">Nucleotide-binding</keyword>
<keyword id="KW-0677">Repeat</keyword>
<keyword id="KW-0742">SOS response</keyword>
<keyword id="KW-0862">Zinc</keyword>
<keyword id="KW-0863">Zinc-finger</keyword>
<organism>
    <name type="scientific">Rickettsia felis (strain ATCC VR-1525 / URRWXCal2)</name>
    <name type="common">Rickettsia azadi</name>
    <dbReference type="NCBI Taxonomy" id="315456"/>
    <lineage>
        <taxon>Bacteria</taxon>
        <taxon>Pseudomonadati</taxon>
        <taxon>Pseudomonadota</taxon>
        <taxon>Alphaproteobacteria</taxon>
        <taxon>Rickettsiales</taxon>
        <taxon>Rickettsiaceae</taxon>
        <taxon>Rickettsieae</taxon>
        <taxon>Rickettsia</taxon>
        <taxon>spotted fever group</taxon>
    </lineage>
</organism>
<protein>
    <recommendedName>
        <fullName evidence="1">UvrABC system protein A</fullName>
        <shortName evidence="1">UvrA protein</shortName>
    </recommendedName>
    <alternativeName>
        <fullName evidence="1">Excinuclease ABC subunit A</fullName>
    </alternativeName>
</protein>
<comment type="function">
    <text evidence="1">The UvrABC repair system catalyzes the recognition and processing of DNA lesions. UvrA is an ATPase and a DNA-binding protein. A damage recognition complex composed of 2 UvrA and 2 UvrB subunits scans DNA for abnormalities. When the presence of a lesion has been verified by UvrB, the UvrA molecules dissociate.</text>
</comment>
<comment type="subunit">
    <text evidence="1">Forms a heterotetramer with UvrB during the search for lesions.</text>
</comment>
<comment type="subcellular location">
    <subcellularLocation>
        <location evidence="1">Cytoplasm</location>
    </subcellularLocation>
</comment>
<comment type="similarity">
    <text evidence="1">Belongs to the ABC transporter superfamily. UvrA family.</text>
</comment>
<name>UVRA_RICFE</name>
<accession>Q4UJW4</accession>
<gene>
    <name evidence="1" type="primary">uvrA</name>
    <name type="ordered locus">RF_1324</name>
</gene>